<dbReference type="EMBL" id="AP008208">
    <property type="status" value="NOT_ANNOTATED_CDS"/>
    <property type="molecule type" value="Genomic_DNA"/>
</dbReference>
<dbReference type="EMBL" id="AP014958">
    <property type="status" value="NOT_ANNOTATED_CDS"/>
    <property type="molecule type" value="Genomic_DNA"/>
</dbReference>
<dbReference type="EMBL" id="CM000139">
    <property type="protein sequence ID" value="EAZ21651.1"/>
    <property type="status" value="ALT_SEQ"/>
    <property type="molecule type" value="Genomic_DNA"/>
</dbReference>
<dbReference type="FunCoup" id="A3A2W2">
    <property type="interactions" value="25"/>
</dbReference>
<dbReference type="STRING" id="39947.A3A2W2"/>
<dbReference type="PaxDb" id="39947-A3A2W2"/>
<dbReference type="eggNOG" id="ENOG502QW75">
    <property type="taxonomic scope" value="Eukaryota"/>
</dbReference>
<dbReference type="HOGENOM" id="CLU_048961_1_0_1"/>
<dbReference type="InParanoid" id="A3A2W2"/>
<dbReference type="Proteomes" id="UP000000763">
    <property type="component" value="Chromosome 2"/>
</dbReference>
<dbReference type="Proteomes" id="UP000007752">
    <property type="component" value="Chromosome 2"/>
</dbReference>
<dbReference type="Proteomes" id="UP000059680">
    <property type="component" value="Chromosome 2"/>
</dbReference>
<dbReference type="GO" id="GO:0005886">
    <property type="term" value="C:plasma membrane"/>
    <property type="evidence" value="ECO:0007669"/>
    <property type="project" value="UniProtKB-SubCell"/>
</dbReference>
<dbReference type="InterPro" id="IPR006702">
    <property type="entry name" value="CASP_dom"/>
</dbReference>
<dbReference type="PANTHER" id="PTHR33573:SF53">
    <property type="entry name" value="CASP-LIKE PROTEIN 4A2"/>
    <property type="match status" value="1"/>
</dbReference>
<dbReference type="PANTHER" id="PTHR33573">
    <property type="entry name" value="CASP-LIKE PROTEIN 4A4"/>
    <property type="match status" value="1"/>
</dbReference>
<dbReference type="Pfam" id="PF04535">
    <property type="entry name" value="CASP_dom"/>
    <property type="match status" value="1"/>
</dbReference>
<dbReference type="PRINTS" id="PR01217">
    <property type="entry name" value="PRICHEXTENSN"/>
</dbReference>
<feature type="chain" id="PRO_0000391601" description="CASP-like protein 4A2">
    <location>
        <begin position="1"/>
        <end position="308"/>
    </location>
</feature>
<feature type="topological domain" description="Cytoplasmic" evidence="2">
    <location>
        <begin position="1"/>
        <end position="161"/>
    </location>
</feature>
<feature type="transmembrane region" description="Helical" evidence="2">
    <location>
        <begin position="162"/>
        <end position="182"/>
    </location>
</feature>
<feature type="topological domain" description="Extracellular" evidence="2">
    <location>
        <begin position="183"/>
        <end position="203"/>
    </location>
</feature>
<feature type="transmembrane region" description="Helical" evidence="2">
    <location>
        <begin position="204"/>
        <end position="224"/>
    </location>
</feature>
<feature type="topological domain" description="Cytoplasmic" evidence="2">
    <location>
        <begin position="225"/>
        <end position="240"/>
    </location>
</feature>
<feature type="transmembrane region" description="Helical" evidence="2">
    <location>
        <begin position="241"/>
        <end position="262"/>
    </location>
</feature>
<feature type="topological domain" description="Extracellular" evidence="2">
    <location>
        <begin position="263"/>
        <end position="280"/>
    </location>
</feature>
<feature type="transmembrane region" description="Helical" evidence="2">
    <location>
        <begin position="281"/>
        <end position="301"/>
    </location>
</feature>
<feature type="topological domain" description="Cytoplasmic" evidence="2">
    <location>
        <begin position="302"/>
        <end position="308"/>
    </location>
</feature>
<feature type="region of interest" description="Disordered" evidence="3">
    <location>
        <begin position="1"/>
        <end position="135"/>
    </location>
</feature>
<feature type="compositionally biased region" description="Gly residues" evidence="3">
    <location>
        <begin position="22"/>
        <end position="31"/>
    </location>
</feature>
<feature type="compositionally biased region" description="Low complexity" evidence="3">
    <location>
        <begin position="32"/>
        <end position="44"/>
    </location>
</feature>
<feature type="compositionally biased region" description="Pro residues" evidence="3">
    <location>
        <begin position="54"/>
        <end position="65"/>
    </location>
</feature>
<feature type="compositionally biased region" description="Pro residues" evidence="3">
    <location>
        <begin position="89"/>
        <end position="132"/>
    </location>
</feature>
<feature type="glycosylation site" description="N-linked (GlcNAc...) asparagine" evidence="2">
    <location>
        <position position="195"/>
    </location>
</feature>
<feature type="glycosylation site" description="N-linked (GlcNAc...) asparagine" evidence="2">
    <location>
        <position position="279"/>
    </location>
</feature>
<evidence type="ECO:0000250" key="1"/>
<evidence type="ECO:0000255" key="2"/>
<evidence type="ECO:0000256" key="3">
    <source>
        <dbReference type="SAM" id="MobiDB-lite"/>
    </source>
</evidence>
<evidence type="ECO:0000305" key="4"/>
<name>CSPLO_ORYSJ</name>
<sequence length="308" mass="33106">MALEAQPSPSPSPRRSPEAAAGGAGAPGGSAGDADAQARRATSGRPRRRGPQPRRSPPPPFPRTPRPSSAARTGKPVSPPPPPRKKPQFQPPPQPPRAWDPSPPPPPPAPAAPVLVPPPAPAPRPAPAPAPRVPARAVEHDHRVVPDILLRKRPTAVLQRTALVARVAAALLCLAALAVLAADSRKGFALDSYSNYSQLRYSEAVNVIGFVYSVLQFFVLADLMRRNKHLNPRRKGDYFDFFMDQVLAYLLISSSSSATARVGDWIDNWGSDPFPKMANSSIAISFMAFLVFAISALISAYNLFRRDI</sequence>
<reference key="1">
    <citation type="journal article" date="2005" name="Nature">
        <title>The map-based sequence of the rice genome.</title>
        <authorList>
            <consortium name="International rice genome sequencing project (IRGSP)"/>
        </authorList>
    </citation>
    <scope>NUCLEOTIDE SEQUENCE [LARGE SCALE GENOMIC DNA]</scope>
    <source>
        <strain>cv. Nipponbare</strain>
    </source>
</reference>
<reference key="2">
    <citation type="journal article" date="2008" name="Nucleic Acids Res.">
        <title>The rice annotation project database (RAP-DB): 2008 update.</title>
        <authorList>
            <consortium name="The rice annotation project (RAP)"/>
        </authorList>
    </citation>
    <scope>GENOME REANNOTATION</scope>
    <source>
        <strain>cv. Nipponbare</strain>
    </source>
</reference>
<reference key="3">
    <citation type="journal article" date="2013" name="Rice">
        <title>Improvement of the Oryza sativa Nipponbare reference genome using next generation sequence and optical map data.</title>
        <authorList>
            <person name="Kawahara Y."/>
            <person name="de la Bastide M."/>
            <person name="Hamilton J.P."/>
            <person name="Kanamori H."/>
            <person name="McCombie W.R."/>
            <person name="Ouyang S."/>
            <person name="Schwartz D.C."/>
            <person name="Tanaka T."/>
            <person name="Wu J."/>
            <person name="Zhou S."/>
            <person name="Childs K.L."/>
            <person name="Davidson R.M."/>
            <person name="Lin H."/>
            <person name="Quesada-Ocampo L."/>
            <person name="Vaillancourt B."/>
            <person name="Sakai H."/>
            <person name="Lee S.S."/>
            <person name="Kim J."/>
            <person name="Numa H."/>
            <person name="Itoh T."/>
            <person name="Buell C.R."/>
            <person name="Matsumoto T."/>
        </authorList>
    </citation>
    <scope>GENOME REANNOTATION</scope>
    <source>
        <strain>cv. Nipponbare</strain>
    </source>
</reference>
<reference key="4">
    <citation type="journal article" date="2005" name="PLoS Biol.">
        <title>The genomes of Oryza sativa: a history of duplications.</title>
        <authorList>
            <person name="Yu J."/>
            <person name="Wang J."/>
            <person name="Lin W."/>
            <person name="Li S."/>
            <person name="Li H."/>
            <person name="Zhou J."/>
            <person name="Ni P."/>
            <person name="Dong W."/>
            <person name="Hu S."/>
            <person name="Zeng C."/>
            <person name="Zhang J."/>
            <person name="Zhang Y."/>
            <person name="Li R."/>
            <person name="Xu Z."/>
            <person name="Li S."/>
            <person name="Li X."/>
            <person name="Zheng H."/>
            <person name="Cong L."/>
            <person name="Lin L."/>
            <person name="Yin J."/>
            <person name="Geng J."/>
            <person name="Li G."/>
            <person name="Shi J."/>
            <person name="Liu J."/>
            <person name="Lv H."/>
            <person name="Li J."/>
            <person name="Wang J."/>
            <person name="Deng Y."/>
            <person name="Ran L."/>
            <person name="Shi X."/>
            <person name="Wang X."/>
            <person name="Wu Q."/>
            <person name="Li C."/>
            <person name="Ren X."/>
            <person name="Wang J."/>
            <person name="Wang X."/>
            <person name="Li D."/>
            <person name="Liu D."/>
            <person name="Zhang X."/>
            <person name="Ji Z."/>
            <person name="Zhao W."/>
            <person name="Sun Y."/>
            <person name="Zhang Z."/>
            <person name="Bao J."/>
            <person name="Han Y."/>
            <person name="Dong L."/>
            <person name="Ji J."/>
            <person name="Chen P."/>
            <person name="Wu S."/>
            <person name="Liu J."/>
            <person name="Xiao Y."/>
            <person name="Bu D."/>
            <person name="Tan J."/>
            <person name="Yang L."/>
            <person name="Ye C."/>
            <person name="Zhang J."/>
            <person name="Xu J."/>
            <person name="Zhou Y."/>
            <person name="Yu Y."/>
            <person name="Zhang B."/>
            <person name="Zhuang S."/>
            <person name="Wei H."/>
            <person name="Liu B."/>
            <person name="Lei M."/>
            <person name="Yu H."/>
            <person name="Li Y."/>
            <person name="Xu H."/>
            <person name="Wei S."/>
            <person name="He X."/>
            <person name="Fang L."/>
            <person name="Zhang Z."/>
            <person name="Zhang Y."/>
            <person name="Huang X."/>
            <person name="Su Z."/>
            <person name="Tong W."/>
            <person name="Li J."/>
            <person name="Tong Z."/>
            <person name="Li S."/>
            <person name="Ye J."/>
            <person name="Wang L."/>
            <person name="Fang L."/>
            <person name="Lei T."/>
            <person name="Chen C.-S."/>
            <person name="Chen H.-C."/>
            <person name="Xu Z."/>
            <person name="Li H."/>
            <person name="Huang H."/>
            <person name="Zhang F."/>
            <person name="Xu H."/>
            <person name="Li N."/>
            <person name="Zhao C."/>
            <person name="Li S."/>
            <person name="Dong L."/>
            <person name="Huang Y."/>
            <person name="Li L."/>
            <person name="Xi Y."/>
            <person name="Qi Q."/>
            <person name="Li W."/>
            <person name="Zhang B."/>
            <person name="Hu W."/>
            <person name="Zhang Y."/>
            <person name="Tian X."/>
            <person name="Jiao Y."/>
            <person name="Liang X."/>
            <person name="Jin J."/>
            <person name="Gao L."/>
            <person name="Zheng W."/>
            <person name="Hao B."/>
            <person name="Liu S.-M."/>
            <person name="Wang W."/>
            <person name="Yuan L."/>
            <person name="Cao M."/>
            <person name="McDermott J."/>
            <person name="Samudrala R."/>
            <person name="Wang J."/>
            <person name="Wong G.K.-S."/>
            <person name="Yang H."/>
        </authorList>
    </citation>
    <scope>NUCLEOTIDE SEQUENCE [LARGE SCALE GENOMIC DNA]</scope>
    <source>
        <strain>cv. Nipponbare</strain>
    </source>
</reference>
<reference key="5">
    <citation type="journal article" date="2014" name="Plant Physiol.">
        <title>Functional and evolutionary analysis of the CASPARIAN STRIP MEMBRANE DOMAIN PROTEIN family.</title>
        <authorList>
            <person name="Roppolo D."/>
            <person name="Boeckmann B."/>
            <person name="Pfister A."/>
            <person name="Boutet E."/>
            <person name="Rubio M.C."/>
            <person name="Denervaud-Tendon V."/>
            <person name="Vermeer J.E."/>
            <person name="Gheyselinck J."/>
            <person name="Xenarios I."/>
            <person name="Geldner N."/>
        </authorList>
    </citation>
    <scope>GENE FAMILY</scope>
    <scope>NOMENCLATURE</scope>
</reference>
<gene>
    <name type="ordered locus">Os02g0134500</name>
    <name type="ordered locus">LOC_Os02g04180</name>
    <name type="ORF">OsJ_05284</name>
</gene>
<comment type="subunit">
    <text evidence="1">Homodimer and heterodimers.</text>
</comment>
<comment type="subcellular location">
    <subcellularLocation>
        <location evidence="1">Cell membrane</location>
        <topology evidence="1">Multi-pass membrane protein</topology>
    </subcellularLocation>
</comment>
<comment type="similarity">
    <text evidence="4">Belongs to the Casparian strip membrane proteins (CASP) family.</text>
</comment>
<comment type="sequence caution" evidence="4">
    <conflict type="erroneous gene model prediction">
        <sequence resource="EMBL-CDS" id="EAZ21651"/>
    </conflict>
</comment>
<accession>A3A2W2</accession>
<protein>
    <recommendedName>
        <fullName>CASP-like protein 4A2</fullName>
        <shortName>OsCASPL4A2</shortName>
    </recommendedName>
</protein>
<keyword id="KW-1003">Cell membrane</keyword>
<keyword id="KW-0325">Glycoprotein</keyword>
<keyword id="KW-0472">Membrane</keyword>
<keyword id="KW-1185">Reference proteome</keyword>
<keyword id="KW-0812">Transmembrane</keyword>
<keyword id="KW-1133">Transmembrane helix</keyword>
<organism>
    <name type="scientific">Oryza sativa subsp. japonica</name>
    <name type="common">Rice</name>
    <dbReference type="NCBI Taxonomy" id="39947"/>
    <lineage>
        <taxon>Eukaryota</taxon>
        <taxon>Viridiplantae</taxon>
        <taxon>Streptophyta</taxon>
        <taxon>Embryophyta</taxon>
        <taxon>Tracheophyta</taxon>
        <taxon>Spermatophyta</taxon>
        <taxon>Magnoliopsida</taxon>
        <taxon>Liliopsida</taxon>
        <taxon>Poales</taxon>
        <taxon>Poaceae</taxon>
        <taxon>BOP clade</taxon>
        <taxon>Oryzoideae</taxon>
        <taxon>Oryzeae</taxon>
        <taxon>Oryzinae</taxon>
        <taxon>Oryza</taxon>
        <taxon>Oryza sativa</taxon>
    </lineage>
</organism>
<proteinExistence type="evidence at transcript level"/>